<organism>
    <name type="scientific">Sodalis glossinidius (strain morsitans)</name>
    <dbReference type="NCBI Taxonomy" id="343509"/>
    <lineage>
        <taxon>Bacteria</taxon>
        <taxon>Pseudomonadati</taxon>
        <taxon>Pseudomonadota</taxon>
        <taxon>Gammaproteobacteria</taxon>
        <taxon>Enterobacterales</taxon>
        <taxon>Bruguierivoracaceae</taxon>
        <taxon>Sodalis</taxon>
    </lineage>
</organism>
<name>AROL_SODGM</name>
<accession>Q2NVB6</accession>
<feature type="chain" id="PRO_0000237938" description="Shikimate kinase 2">
    <location>
        <begin position="1"/>
        <end position="174"/>
    </location>
</feature>
<feature type="region of interest" description="LID domain">
    <location>
        <begin position="112"/>
        <end position="126"/>
    </location>
</feature>
<feature type="binding site" evidence="1">
    <location>
        <begin position="12"/>
        <end position="17"/>
    </location>
    <ligand>
        <name>ATP</name>
        <dbReference type="ChEBI" id="CHEBI:30616"/>
    </ligand>
</feature>
<feature type="binding site" evidence="1">
    <location>
        <position position="16"/>
    </location>
    <ligand>
        <name>Mg(2+)</name>
        <dbReference type="ChEBI" id="CHEBI:18420"/>
    </ligand>
</feature>
<feature type="binding site" evidence="1">
    <location>
        <position position="32"/>
    </location>
    <ligand>
        <name>Mg(2+)</name>
        <dbReference type="ChEBI" id="CHEBI:18420"/>
    </ligand>
</feature>
<feature type="binding site" evidence="1">
    <location>
        <position position="34"/>
    </location>
    <ligand>
        <name>substrate</name>
    </ligand>
</feature>
<feature type="binding site" evidence="1">
    <location>
        <position position="58"/>
    </location>
    <ligand>
        <name>substrate</name>
    </ligand>
</feature>
<feature type="binding site" evidence="1">
    <location>
        <position position="79"/>
    </location>
    <ligand>
        <name>substrate</name>
    </ligand>
</feature>
<feature type="binding site" evidence="1">
    <location>
        <position position="120"/>
    </location>
    <ligand>
        <name>ATP</name>
        <dbReference type="ChEBI" id="CHEBI:30616"/>
    </ligand>
</feature>
<feature type="binding site" evidence="1">
    <location>
        <position position="139"/>
    </location>
    <ligand>
        <name>substrate</name>
    </ligand>
</feature>
<feature type="binding site" evidence="1">
    <location>
        <position position="155"/>
    </location>
    <ligand>
        <name>ATP</name>
        <dbReference type="ChEBI" id="CHEBI:30616"/>
    </ligand>
</feature>
<dbReference type="EC" id="2.7.1.71" evidence="1"/>
<dbReference type="EMBL" id="AP008232">
    <property type="protein sequence ID" value="BAE73909.1"/>
    <property type="molecule type" value="Genomic_DNA"/>
</dbReference>
<dbReference type="RefSeq" id="WP_011410387.1">
    <property type="nucleotide sequence ID" value="NC_007712.1"/>
</dbReference>
<dbReference type="SMR" id="Q2NVB6"/>
<dbReference type="STRING" id="343509.SG0634"/>
<dbReference type="KEGG" id="sgl:SG0634"/>
<dbReference type="eggNOG" id="COG0703">
    <property type="taxonomic scope" value="Bacteria"/>
</dbReference>
<dbReference type="HOGENOM" id="CLU_057607_4_3_6"/>
<dbReference type="OrthoDB" id="9800332at2"/>
<dbReference type="UniPathway" id="UPA00053">
    <property type="reaction ID" value="UER00088"/>
</dbReference>
<dbReference type="Proteomes" id="UP000001932">
    <property type="component" value="Chromosome"/>
</dbReference>
<dbReference type="GO" id="GO:0005829">
    <property type="term" value="C:cytosol"/>
    <property type="evidence" value="ECO:0007669"/>
    <property type="project" value="TreeGrafter"/>
</dbReference>
<dbReference type="GO" id="GO:0005524">
    <property type="term" value="F:ATP binding"/>
    <property type="evidence" value="ECO:0007669"/>
    <property type="project" value="UniProtKB-UniRule"/>
</dbReference>
<dbReference type="GO" id="GO:0000287">
    <property type="term" value="F:magnesium ion binding"/>
    <property type="evidence" value="ECO:0007669"/>
    <property type="project" value="UniProtKB-UniRule"/>
</dbReference>
<dbReference type="GO" id="GO:0004765">
    <property type="term" value="F:shikimate kinase activity"/>
    <property type="evidence" value="ECO:0007669"/>
    <property type="project" value="UniProtKB-UniRule"/>
</dbReference>
<dbReference type="GO" id="GO:0008652">
    <property type="term" value="P:amino acid biosynthetic process"/>
    <property type="evidence" value="ECO:0007669"/>
    <property type="project" value="UniProtKB-KW"/>
</dbReference>
<dbReference type="GO" id="GO:0009073">
    <property type="term" value="P:aromatic amino acid family biosynthetic process"/>
    <property type="evidence" value="ECO:0007669"/>
    <property type="project" value="UniProtKB-KW"/>
</dbReference>
<dbReference type="GO" id="GO:0009423">
    <property type="term" value="P:chorismate biosynthetic process"/>
    <property type="evidence" value="ECO:0007669"/>
    <property type="project" value="UniProtKB-UniRule"/>
</dbReference>
<dbReference type="CDD" id="cd00464">
    <property type="entry name" value="SK"/>
    <property type="match status" value="1"/>
</dbReference>
<dbReference type="Gene3D" id="3.40.50.300">
    <property type="entry name" value="P-loop containing nucleotide triphosphate hydrolases"/>
    <property type="match status" value="1"/>
</dbReference>
<dbReference type="HAMAP" id="MF_00109">
    <property type="entry name" value="Shikimate_kinase"/>
    <property type="match status" value="1"/>
</dbReference>
<dbReference type="HAMAP" id="MF_01269">
    <property type="entry name" value="Shikimate_kinase_2"/>
    <property type="match status" value="1"/>
</dbReference>
<dbReference type="InterPro" id="IPR027417">
    <property type="entry name" value="P-loop_NTPase"/>
</dbReference>
<dbReference type="InterPro" id="IPR031322">
    <property type="entry name" value="Shikimate/glucono_kinase"/>
</dbReference>
<dbReference type="InterPro" id="IPR000623">
    <property type="entry name" value="Shikimate_kinase/TSH1"/>
</dbReference>
<dbReference type="InterPro" id="IPR027544">
    <property type="entry name" value="Shikimate_kinase_2"/>
</dbReference>
<dbReference type="InterPro" id="IPR023000">
    <property type="entry name" value="Shikimate_kinase_CS"/>
</dbReference>
<dbReference type="NCBIfam" id="NF002988">
    <property type="entry name" value="PRK03731.1"/>
    <property type="match status" value="1"/>
</dbReference>
<dbReference type="PANTHER" id="PTHR21087">
    <property type="entry name" value="SHIKIMATE KINASE"/>
    <property type="match status" value="1"/>
</dbReference>
<dbReference type="PANTHER" id="PTHR21087:SF21">
    <property type="entry name" value="SHIKIMATE KINASE 2"/>
    <property type="match status" value="1"/>
</dbReference>
<dbReference type="Pfam" id="PF01202">
    <property type="entry name" value="SKI"/>
    <property type="match status" value="1"/>
</dbReference>
<dbReference type="PRINTS" id="PR01100">
    <property type="entry name" value="SHIKIMTKNASE"/>
</dbReference>
<dbReference type="SUPFAM" id="SSF52540">
    <property type="entry name" value="P-loop containing nucleoside triphosphate hydrolases"/>
    <property type="match status" value="1"/>
</dbReference>
<dbReference type="PROSITE" id="PS01128">
    <property type="entry name" value="SHIKIMATE_KINASE"/>
    <property type="match status" value="1"/>
</dbReference>
<protein>
    <recommendedName>
        <fullName evidence="1">Shikimate kinase 2</fullName>
        <shortName evidence="1">SK 2</shortName>
        <ecNumber evidence="1">2.7.1.71</ecNumber>
    </recommendedName>
</protein>
<keyword id="KW-0028">Amino-acid biosynthesis</keyword>
<keyword id="KW-0057">Aromatic amino acid biosynthesis</keyword>
<keyword id="KW-0067">ATP-binding</keyword>
<keyword id="KW-0963">Cytoplasm</keyword>
<keyword id="KW-0418">Kinase</keyword>
<keyword id="KW-0460">Magnesium</keyword>
<keyword id="KW-0479">Metal-binding</keyword>
<keyword id="KW-0547">Nucleotide-binding</keyword>
<keyword id="KW-0808">Transferase</keyword>
<sequence>MTQHLFMVGARGCGKTTVGQALARVLGYAFADTDDMLWRSTGKTVAEIVAKEGWTGFRARESEILTSVTQGNAVVATGGGIILSAANRRFMRARGTVVYLHATAQELSRRLRAYPEDDQRPSLTGKPMIEEIAEVLAAREKLYQEAAHHVLDASQPPDDVVSAILQQLYPSAAS</sequence>
<proteinExistence type="inferred from homology"/>
<comment type="function">
    <text evidence="1">Catalyzes the specific phosphorylation of the 3-hydroxyl group of shikimic acid using ATP as a cosubstrate.</text>
</comment>
<comment type="catalytic activity">
    <reaction evidence="1">
        <text>shikimate + ATP = 3-phosphoshikimate + ADP + H(+)</text>
        <dbReference type="Rhea" id="RHEA:13121"/>
        <dbReference type="ChEBI" id="CHEBI:15378"/>
        <dbReference type="ChEBI" id="CHEBI:30616"/>
        <dbReference type="ChEBI" id="CHEBI:36208"/>
        <dbReference type="ChEBI" id="CHEBI:145989"/>
        <dbReference type="ChEBI" id="CHEBI:456216"/>
        <dbReference type="EC" id="2.7.1.71"/>
    </reaction>
</comment>
<comment type="cofactor">
    <cofactor evidence="1">
        <name>Mg(2+)</name>
        <dbReference type="ChEBI" id="CHEBI:18420"/>
    </cofactor>
    <text evidence="1">Binds 1 Mg(2+) ion per subunit.</text>
</comment>
<comment type="pathway">
    <text evidence="1">Metabolic intermediate biosynthesis; chorismate biosynthesis; chorismate from D-erythrose 4-phosphate and phosphoenolpyruvate: step 5/7.</text>
</comment>
<comment type="subunit">
    <text evidence="1">Monomer.</text>
</comment>
<comment type="subcellular location">
    <subcellularLocation>
        <location evidence="1">Cytoplasm</location>
    </subcellularLocation>
</comment>
<comment type="domain">
    <text evidence="1">The LID domain closes over the active site upon ATP binding.</text>
</comment>
<comment type="similarity">
    <text evidence="1">Belongs to the shikimate kinase family. AroL subfamily.</text>
</comment>
<gene>
    <name evidence="1" type="primary">aroL</name>
    <name type="ordered locus">SG0634</name>
</gene>
<reference key="1">
    <citation type="journal article" date="2006" name="Genome Res.">
        <title>Massive genome erosion and functional adaptations provide insights into the symbiotic lifestyle of Sodalis glossinidius in the tsetse host.</title>
        <authorList>
            <person name="Toh H."/>
            <person name="Weiss B.L."/>
            <person name="Perkin S.A.H."/>
            <person name="Yamashita A."/>
            <person name="Oshima K."/>
            <person name="Hattori M."/>
            <person name="Aksoy S."/>
        </authorList>
    </citation>
    <scope>NUCLEOTIDE SEQUENCE [LARGE SCALE GENOMIC DNA]</scope>
    <source>
        <strain>morsitans</strain>
    </source>
</reference>
<evidence type="ECO:0000255" key="1">
    <source>
        <dbReference type="HAMAP-Rule" id="MF_01269"/>
    </source>
</evidence>